<dbReference type="EC" id="1.6.5.2" evidence="1"/>
<dbReference type="EMBL" id="CP001144">
    <property type="protein sequence ID" value="ACH75545.1"/>
    <property type="molecule type" value="Genomic_DNA"/>
</dbReference>
<dbReference type="RefSeq" id="WP_000081820.1">
    <property type="nucleotide sequence ID" value="NC_011205.1"/>
</dbReference>
<dbReference type="SMR" id="B5FJN2"/>
<dbReference type="KEGG" id="sed:SeD_A3826"/>
<dbReference type="HOGENOM" id="CLU_058643_0_1_6"/>
<dbReference type="Proteomes" id="UP000008322">
    <property type="component" value="Chromosome"/>
</dbReference>
<dbReference type="GO" id="GO:0005886">
    <property type="term" value="C:plasma membrane"/>
    <property type="evidence" value="ECO:0007669"/>
    <property type="project" value="UniProtKB-SubCell"/>
</dbReference>
<dbReference type="GO" id="GO:0009055">
    <property type="term" value="F:electron transfer activity"/>
    <property type="evidence" value="ECO:0007669"/>
    <property type="project" value="TreeGrafter"/>
</dbReference>
<dbReference type="GO" id="GO:0010181">
    <property type="term" value="F:FMN binding"/>
    <property type="evidence" value="ECO:0007669"/>
    <property type="project" value="TreeGrafter"/>
</dbReference>
<dbReference type="GO" id="GO:0050136">
    <property type="term" value="F:NADH:ubiquinone reductase (non-electrogenic) activity"/>
    <property type="evidence" value="ECO:0007669"/>
    <property type="project" value="RHEA"/>
</dbReference>
<dbReference type="GO" id="GO:0008753">
    <property type="term" value="F:NADPH dehydrogenase (quinone) activity"/>
    <property type="evidence" value="ECO:0007669"/>
    <property type="project" value="RHEA"/>
</dbReference>
<dbReference type="GO" id="GO:1901381">
    <property type="term" value="P:positive regulation of potassium ion transmembrane transport"/>
    <property type="evidence" value="ECO:0007669"/>
    <property type="project" value="UniProtKB-UniRule"/>
</dbReference>
<dbReference type="GO" id="GO:0006813">
    <property type="term" value="P:potassium ion transport"/>
    <property type="evidence" value="ECO:0007669"/>
    <property type="project" value="InterPro"/>
</dbReference>
<dbReference type="FunFam" id="3.40.50.360:FF:000013">
    <property type="entry name" value="Glutathione-regulated potassium-efflux system ancillary protein KefG"/>
    <property type="match status" value="1"/>
</dbReference>
<dbReference type="Gene3D" id="3.40.50.360">
    <property type="match status" value="1"/>
</dbReference>
<dbReference type="HAMAP" id="MF_01415">
    <property type="entry name" value="K_H_efflux_KefG"/>
    <property type="match status" value="1"/>
</dbReference>
<dbReference type="InterPro" id="IPR003680">
    <property type="entry name" value="Flavodoxin_fold"/>
</dbReference>
<dbReference type="InterPro" id="IPR029039">
    <property type="entry name" value="Flavoprotein-like_sf"/>
</dbReference>
<dbReference type="InterPro" id="IPR023947">
    <property type="entry name" value="K_H_efflux_KefG"/>
</dbReference>
<dbReference type="InterPro" id="IPR046980">
    <property type="entry name" value="KefG/KefF"/>
</dbReference>
<dbReference type="NCBIfam" id="NF003430">
    <property type="entry name" value="PRK04930.1"/>
    <property type="match status" value="1"/>
</dbReference>
<dbReference type="PANTHER" id="PTHR47307">
    <property type="entry name" value="GLUTATHIONE-REGULATED POTASSIUM-EFFLUX SYSTEM ANCILLARY PROTEIN KEFG"/>
    <property type="match status" value="1"/>
</dbReference>
<dbReference type="PANTHER" id="PTHR47307:SF1">
    <property type="entry name" value="GLUTATHIONE-REGULATED POTASSIUM-EFFLUX SYSTEM ANCILLARY PROTEIN KEFG"/>
    <property type="match status" value="1"/>
</dbReference>
<dbReference type="Pfam" id="PF02525">
    <property type="entry name" value="Flavodoxin_2"/>
    <property type="match status" value="1"/>
</dbReference>
<dbReference type="SUPFAM" id="SSF52218">
    <property type="entry name" value="Flavoproteins"/>
    <property type="match status" value="1"/>
</dbReference>
<proteinExistence type="inferred from homology"/>
<name>KEFG_SALDC</name>
<sequence length="183" mass="20927">MSQPAKVLLLYAHPESQDSVANRVLLKPAIQHNNVTVHDLYARYPDFFIDTPYEQALLREHDVIVFQHPLYTYSCPALLKEWLDRVLSRGFASGPGGNQLVGKYWRSVITTGEPESAYRYDALNRYPMSDVLRPFELTAAMCRMHWMPPIIVYWARRQSPQTLASHAKAYGEWLANPVSAGGY</sequence>
<comment type="function">
    <text evidence="1">Regulatory subunit of a potassium efflux system that confers protection against electrophiles. Required for full activity of KefB.</text>
</comment>
<comment type="catalytic activity">
    <reaction evidence="1">
        <text>a quinone + NADH + H(+) = a quinol + NAD(+)</text>
        <dbReference type="Rhea" id="RHEA:46160"/>
        <dbReference type="ChEBI" id="CHEBI:15378"/>
        <dbReference type="ChEBI" id="CHEBI:24646"/>
        <dbReference type="ChEBI" id="CHEBI:57540"/>
        <dbReference type="ChEBI" id="CHEBI:57945"/>
        <dbReference type="ChEBI" id="CHEBI:132124"/>
        <dbReference type="EC" id="1.6.5.2"/>
    </reaction>
</comment>
<comment type="catalytic activity">
    <reaction evidence="1">
        <text>a quinone + NADPH + H(+) = a quinol + NADP(+)</text>
        <dbReference type="Rhea" id="RHEA:46164"/>
        <dbReference type="ChEBI" id="CHEBI:15378"/>
        <dbReference type="ChEBI" id="CHEBI:24646"/>
        <dbReference type="ChEBI" id="CHEBI:57783"/>
        <dbReference type="ChEBI" id="CHEBI:58349"/>
        <dbReference type="ChEBI" id="CHEBI:132124"/>
        <dbReference type="EC" id="1.6.5.2"/>
    </reaction>
</comment>
<comment type="subunit">
    <text evidence="1">Interacts with KefB.</text>
</comment>
<comment type="subcellular location">
    <subcellularLocation>
        <location evidence="1">Cell inner membrane</location>
        <topology evidence="1">Peripheral membrane protein</topology>
        <orientation evidence="1">Cytoplasmic side</orientation>
    </subcellularLocation>
</comment>
<comment type="similarity">
    <text evidence="1">Belongs to the NAD(P)H dehydrogenase (quinone) family. KefG subfamily.</text>
</comment>
<accession>B5FJN2</accession>
<protein>
    <recommendedName>
        <fullName evidence="1">Glutathione-regulated potassium-efflux system ancillary protein KefG</fullName>
    </recommendedName>
    <alternativeName>
        <fullName evidence="1">Putative quinone oxidoreductase KefG</fullName>
        <ecNumber evidence="1">1.6.5.2</ecNumber>
    </alternativeName>
</protein>
<gene>
    <name evidence="1" type="primary">kefG</name>
    <name type="ordered locus">SeD_A3826</name>
</gene>
<reference key="1">
    <citation type="journal article" date="2011" name="J. Bacteriol.">
        <title>Comparative genomics of 28 Salmonella enterica isolates: evidence for CRISPR-mediated adaptive sublineage evolution.</title>
        <authorList>
            <person name="Fricke W.F."/>
            <person name="Mammel M.K."/>
            <person name="McDermott P.F."/>
            <person name="Tartera C."/>
            <person name="White D.G."/>
            <person name="Leclerc J.E."/>
            <person name="Ravel J."/>
            <person name="Cebula T.A."/>
        </authorList>
    </citation>
    <scope>NUCLEOTIDE SEQUENCE [LARGE SCALE GENOMIC DNA]</scope>
    <source>
        <strain>CT_02021853</strain>
    </source>
</reference>
<evidence type="ECO:0000255" key="1">
    <source>
        <dbReference type="HAMAP-Rule" id="MF_01415"/>
    </source>
</evidence>
<feature type="chain" id="PRO_1000145582" description="Glutathione-regulated potassium-efflux system ancillary protein KefG">
    <location>
        <begin position="1"/>
        <end position="183"/>
    </location>
</feature>
<organism>
    <name type="scientific">Salmonella dublin (strain CT_02021853)</name>
    <dbReference type="NCBI Taxonomy" id="439851"/>
    <lineage>
        <taxon>Bacteria</taxon>
        <taxon>Pseudomonadati</taxon>
        <taxon>Pseudomonadota</taxon>
        <taxon>Gammaproteobacteria</taxon>
        <taxon>Enterobacterales</taxon>
        <taxon>Enterobacteriaceae</taxon>
        <taxon>Salmonella</taxon>
    </lineage>
</organism>
<keyword id="KW-0997">Cell inner membrane</keyword>
<keyword id="KW-1003">Cell membrane</keyword>
<keyword id="KW-0472">Membrane</keyword>
<keyword id="KW-0520">NAD</keyword>
<keyword id="KW-0560">Oxidoreductase</keyword>